<comment type="function">
    <text evidence="1">Involved in the TonB-dependent energy-dependent transport of various receptor-bound substrates.</text>
</comment>
<comment type="subunit">
    <text evidence="1">The accessory proteins ExbB and ExbD seem to form a complex with TonB.</text>
</comment>
<comment type="subcellular location">
    <subcellularLocation>
        <location evidence="3">Cell inner membrane</location>
        <topology evidence="3">Single-pass type II membrane protein</topology>
    </subcellularLocation>
</comment>
<comment type="similarity">
    <text evidence="3">Belongs to the ExbD/TolR family.</text>
</comment>
<keyword id="KW-0997">Cell inner membrane</keyword>
<keyword id="KW-1003">Cell membrane</keyword>
<keyword id="KW-0472">Membrane</keyword>
<keyword id="KW-0653">Protein transport</keyword>
<keyword id="KW-0812">Transmembrane</keyword>
<keyword id="KW-1133">Transmembrane helix</keyword>
<keyword id="KW-0813">Transport</keyword>
<evidence type="ECO:0000250" key="1"/>
<evidence type="ECO:0000255" key="2"/>
<evidence type="ECO:0000305" key="3"/>
<organism>
    <name type="scientific">Helicobacter pylori (strain J99 / ATCC 700824)</name>
    <name type="common">Campylobacter pylori J99</name>
    <dbReference type="NCBI Taxonomy" id="85963"/>
    <lineage>
        <taxon>Bacteria</taxon>
        <taxon>Pseudomonadati</taxon>
        <taxon>Campylobacterota</taxon>
        <taxon>Epsilonproteobacteria</taxon>
        <taxon>Campylobacterales</taxon>
        <taxon>Helicobacteraceae</taxon>
        <taxon>Helicobacter</taxon>
    </lineage>
</organism>
<proteinExistence type="inferred from homology"/>
<dbReference type="EMBL" id="AE001439">
    <property type="protein sequence ID" value="AAD06832.1"/>
    <property type="molecule type" value="Genomic_DNA"/>
</dbReference>
<dbReference type="PIR" id="E71829">
    <property type="entry name" value="E71829"/>
</dbReference>
<dbReference type="RefSeq" id="WP_000836356.1">
    <property type="nucleotide sequence ID" value="NZ_CP011330.1"/>
</dbReference>
<dbReference type="SMR" id="Q9ZJP5"/>
<dbReference type="KEGG" id="hpj:jhp_1259"/>
<dbReference type="PATRIC" id="fig|85963.30.peg.1312"/>
<dbReference type="eggNOG" id="COG0848">
    <property type="taxonomic scope" value="Bacteria"/>
</dbReference>
<dbReference type="Proteomes" id="UP000000804">
    <property type="component" value="Chromosome"/>
</dbReference>
<dbReference type="GO" id="GO:0005886">
    <property type="term" value="C:plasma membrane"/>
    <property type="evidence" value="ECO:0007669"/>
    <property type="project" value="UniProtKB-SubCell"/>
</dbReference>
<dbReference type="GO" id="GO:0022857">
    <property type="term" value="F:transmembrane transporter activity"/>
    <property type="evidence" value="ECO:0007669"/>
    <property type="project" value="InterPro"/>
</dbReference>
<dbReference type="GO" id="GO:0015031">
    <property type="term" value="P:protein transport"/>
    <property type="evidence" value="ECO:0007669"/>
    <property type="project" value="UniProtKB-KW"/>
</dbReference>
<dbReference type="Gene3D" id="3.30.420.270">
    <property type="match status" value="1"/>
</dbReference>
<dbReference type="InterPro" id="IPR003400">
    <property type="entry name" value="ExbD"/>
</dbReference>
<dbReference type="InterPro" id="IPR014171">
    <property type="entry name" value="TonB_ExbD_2"/>
</dbReference>
<dbReference type="NCBIfam" id="TIGR02804">
    <property type="entry name" value="ExbD_2"/>
    <property type="match status" value="1"/>
</dbReference>
<dbReference type="PANTHER" id="PTHR30558:SF12">
    <property type="entry name" value="BIOPOLYMER TRANSPORT PROTEIN EXBD"/>
    <property type="match status" value="1"/>
</dbReference>
<dbReference type="PANTHER" id="PTHR30558">
    <property type="entry name" value="EXBD MEMBRANE COMPONENT OF PMF-DRIVEN MACROMOLECULE IMPORT SYSTEM"/>
    <property type="match status" value="1"/>
</dbReference>
<dbReference type="Pfam" id="PF02472">
    <property type="entry name" value="ExbD"/>
    <property type="match status" value="1"/>
</dbReference>
<gene>
    <name type="primary">exbD</name>
    <name type="ordered locus">jhp_1259</name>
</gene>
<name>EXBD_HELPJ</name>
<sequence length="129" mass="14347">MKSIRRGDGLNVVPFIDIMLVLLAIVLSISTFIAQGKIKVSLPNAKNAEKSQPNDQKVVVISVDEHDNIFVDDKPTNLEALSAVVKQTDPKTLIDLKSDKSSRFETFISIMDILKEHNHENFSISTQAQ</sequence>
<feature type="chain" id="PRO_0000129123" description="Biopolymer transport protein ExbD">
    <location>
        <begin position="1"/>
        <end position="129"/>
    </location>
</feature>
<feature type="topological domain" description="Cytoplasmic" evidence="2">
    <location>
        <begin position="1"/>
        <end position="12"/>
    </location>
</feature>
<feature type="transmembrane region" description="Helical" evidence="2">
    <location>
        <begin position="13"/>
        <end position="33"/>
    </location>
</feature>
<feature type="topological domain" description="Periplasmic" evidence="2">
    <location>
        <begin position="34"/>
        <end position="129"/>
    </location>
</feature>
<accession>Q9ZJP5</accession>
<protein>
    <recommendedName>
        <fullName>Biopolymer transport protein ExbD</fullName>
    </recommendedName>
</protein>
<reference key="1">
    <citation type="journal article" date="1999" name="Nature">
        <title>Genomic sequence comparison of two unrelated isolates of the human gastric pathogen Helicobacter pylori.</title>
        <authorList>
            <person name="Alm R.A."/>
            <person name="Ling L.-S.L."/>
            <person name="Moir D.T."/>
            <person name="King B.L."/>
            <person name="Brown E.D."/>
            <person name="Doig P.C."/>
            <person name="Smith D.R."/>
            <person name="Noonan B."/>
            <person name="Guild B.C."/>
            <person name="deJonge B.L."/>
            <person name="Carmel G."/>
            <person name="Tummino P.J."/>
            <person name="Caruso A."/>
            <person name="Uria-Nickelsen M."/>
            <person name="Mills D.M."/>
            <person name="Ives C."/>
            <person name="Gibson R."/>
            <person name="Merberg D."/>
            <person name="Mills S.D."/>
            <person name="Jiang Q."/>
            <person name="Taylor D.E."/>
            <person name="Vovis G.F."/>
            <person name="Trust T.J."/>
        </authorList>
    </citation>
    <scope>NUCLEOTIDE SEQUENCE [LARGE SCALE GENOMIC DNA]</scope>
    <source>
        <strain>J99 / ATCC 700824</strain>
    </source>
</reference>